<sequence>MSWQAYVDDHLMCDLEGNPGHHLAAAAILGQDGSVWAQSTAFPQFKPDEINGILTDFNEPGHLAPTGLHLGGAKYMVIQGEPGAVIRGKKGSGGITIKKTGQALVFGIYEEPVTPGQCNMVVERLGDYLLEQGL</sequence>
<organism>
    <name type="scientific">Olea europaea</name>
    <name type="common">Common olive</name>
    <dbReference type="NCBI Taxonomy" id="4146"/>
    <lineage>
        <taxon>Eukaryota</taxon>
        <taxon>Viridiplantae</taxon>
        <taxon>Streptophyta</taxon>
        <taxon>Embryophyta</taxon>
        <taxon>Tracheophyta</taxon>
        <taxon>Spermatophyta</taxon>
        <taxon>Magnoliopsida</taxon>
        <taxon>eudicotyledons</taxon>
        <taxon>Gunneridae</taxon>
        <taxon>Pentapetalae</taxon>
        <taxon>asterids</taxon>
        <taxon>lamiids</taxon>
        <taxon>Lamiales</taxon>
        <taxon>Oleaceae</taxon>
        <taxon>Oleeae</taxon>
        <taxon>Olea</taxon>
    </lineage>
</organism>
<accession>A4GFB7</accession>
<keyword id="KW-0009">Actin-binding</keyword>
<keyword id="KW-0020">Allergen</keyword>
<keyword id="KW-0963">Cytoplasm</keyword>
<keyword id="KW-0206">Cytoskeleton</keyword>
<keyword id="KW-1015">Disulfide bond</keyword>
<keyword id="KW-0597">Phosphoprotein</keyword>
<dbReference type="EMBL" id="DQ640903">
    <property type="protein sequence ID" value="ABG33899.1"/>
    <property type="molecule type" value="mRNA"/>
</dbReference>
<dbReference type="SMR" id="A4GFB7"/>
<dbReference type="Allergome" id="490">
    <property type="allergen name" value="Ole e 2"/>
</dbReference>
<dbReference type="GO" id="GO:0005938">
    <property type="term" value="C:cell cortex"/>
    <property type="evidence" value="ECO:0007669"/>
    <property type="project" value="TreeGrafter"/>
</dbReference>
<dbReference type="GO" id="GO:0005856">
    <property type="term" value="C:cytoskeleton"/>
    <property type="evidence" value="ECO:0007669"/>
    <property type="project" value="UniProtKB-SubCell"/>
</dbReference>
<dbReference type="GO" id="GO:0003785">
    <property type="term" value="F:actin monomer binding"/>
    <property type="evidence" value="ECO:0007669"/>
    <property type="project" value="TreeGrafter"/>
</dbReference>
<dbReference type="CDD" id="cd00148">
    <property type="entry name" value="PROF"/>
    <property type="match status" value="1"/>
</dbReference>
<dbReference type="FunFam" id="3.30.450.30:FF:000001">
    <property type="entry name" value="Profilin"/>
    <property type="match status" value="1"/>
</dbReference>
<dbReference type="Gene3D" id="3.30.450.30">
    <property type="entry name" value="Dynein light chain 2a, cytoplasmic"/>
    <property type="match status" value="1"/>
</dbReference>
<dbReference type="InterPro" id="IPR048278">
    <property type="entry name" value="PFN"/>
</dbReference>
<dbReference type="InterPro" id="IPR005455">
    <property type="entry name" value="PFN_euk"/>
</dbReference>
<dbReference type="InterPro" id="IPR036140">
    <property type="entry name" value="PFN_sf"/>
</dbReference>
<dbReference type="InterPro" id="IPR027310">
    <property type="entry name" value="Profilin_CS"/>
</dbReference>
<dbReference type="PANTHER" id="PTHR11604">
    <property type="entry name" value="PROFILIN"/>
    <property type="match status" value="1"/>
</dbReference>
<dbReference type="PANTHER" id="PTHR11604:SF25">
    <property type="entry name" value="PROFILIN-5"/>
    <property type="match status" value="1"/>
</dbReference>
<dbReference type="Pfam" id="PF00235">
    <property type="entry name" value="Profilin"/>
    <property type="match status" value="1"/>
</dbReference>
<dbReference type="PRINTS" id="PR00392">
    <property type="entry name" value="PROFILIN"/>
</dbReference>
<dbReference type="PRINTS" id="PR01640">
    <property type="entry name" value="PROFILINPLNT"/>
</dbReference>
<dbReference type="SMART" id="SM00392">
    <property type="entry name" value="PROF"/>
    <property type="match status" value="1"/>
</dbReference>
<dbReference type="SUPFAM" id="SSF55770">
    <property type="entry name" value="Profilin (actin-binding protein)"/>
    <property type="match status" value="1"/>
</dbReference>
<dbReference type="PROSITE" id="PS00414">
    <property type="entry name" value="PROFILIN"/>
    <property type="match status" value="1"/>
</dbReference>
<feature type="initiator methionine" description="Removed" evidence="1">
    <location>
        <position position="1"/>
    </location>
</feature>
<feature type="chain" id="PRO_0000425044" description="Profilin-2">
    <location>
        <begin position="2"/>
        <end position="134"/>
    </location>
</feature>
<feature type="short sequence motif" description="Involved in PIP2 interaction">
    <location>
        <begin position="84"/>
        <end position="100"/>
    </location>
</feature>
<feature type="modified residue" description="Phosphothreonine" evidence="1">
    <location>
        <position position="114"/>
    </location>
</feature>
<feature type="disulfide bond" evidence="3">
    <location>
        <begin position="13"/>
        <end position="118"/>
    </location>
</feature>
<evidence type="ECO:0000250" key="1"/>
<evidence type="ECO:0000305" key="2"/>
<evidence type="ECO:0000305" key="3">
    <source>
    </source>
</evidence>
<reference key="1">
    <citation type="journal article" date="2012" name="PLoS ONE">
        <title>Characterization of profilin polymorphism in pollen with a focus on multifunctionality.</title>
        <authorList>
            <person name="Jimenez-Lopez J.C."/>
            <person name="Morales S."/>
            <person name="Castro A.J."/>
            <person name="Volkmann D."/>
            <person name="Rodriguez-Garcia M.I."/>
            <person name="Alche Jde D."/>
        </authorList>
    </citation>
    <scope>NUCLEOTIDE SEQUENCE [MRNA]</scope>
    <scope>POLYMORPHISM</scope>
    <source>
        <strain>cv. Loaime</strain>
    </source>
</reference>
<reference key="2">
    <citation type="journal article" date="2013" name="PLoS ONE">
        <title>Analysis of the effects of polymorphism on pollen profilin structural functionality and the generation of conformational, T- and B-cell epitopes.</title>
        <authorList>
            <person name="Jimenez-Lopez J.C."/>
            <person name="Rodriguez-Garcia M.I."/>
            <person name="Alche J.D."/>
        </authorList>
    </citation>
    <scope>3D-STRUCTURE MODELING</scope>
    <scope>DISULFIDE BOND</scope>
</reference>
<name>PROCA_OLEEU</name>
<comment type="function">
    <text evidence="1">Binds to actin and affects the structure of the cytoskeleton. At high concentrations, profilin prevents the polymerization of actin, whereas it enhances it at low concentrations (By similarity).</text>
</comment>
<comment type="subunit">
    <text evidence="1">Occurs in many kinds of cells as a complex with monomeric actin in a 1:1 ratio.</text>
</comment>
<comment type="subcellular location">
    <subcellularLocation>
        <location evidence="1">Cytoplasm</location>
        <location evidence="1">Cytoskeleton</location>
    </subcellularLocation>
</comment>
<comment type="PTM">
    <text evidence="1">Phosphorylated by MAP kinases.</text>
</comment>
<comment type="polymorphism">
    <text>Several isoforms of the allergen exist due to polymorphism.</text>
</comment>
<comment type="allergen">
    <text>Causes an allergic reaction in human.</text>
</comment>
<comment type="miscellaneous">
    <text evidence="3">The variability of the residues taking part of IgE-binding epitopes might be responsible of the difference in cross-reactivity among olive pollen cultivars, and between distantly related pollen species, leading to a variable range of allergy reactions among atopic patients.</text>
</comment>
<comment type="similarity">
    <text evidence="2">Belongs to the profilin family.</text>
</comment>
<protein>
    <recommendedName>
        <fullName>Profilin-2</fullName>
    </recommendedName>
    <alternativeName>
        <fullName>Pollen allergen Ole e 2</fullName>
    </alternativeName>
    <allergenName>Ole e 2</allergenName>
</protein>
<proteinExistence type="evidence at protein level"/>